<evidence type="ECO:0000255" key="1">
    <source>
        <dbReference type="HAMAP-Rule" id="MF_00016"/>
    </source>
</evidence>
<keyword id="KW-0067">ATP-binding</keyword>
<keyword id="KW-0963">Cytoplasm</keyword>
<keyword id="KW-0227">DNA damage</keyword>
<keyword id="KW-0233">DNA recombination</keyword>
<keyword id="KW-0234">DNA repair</keyword>
<keyword id="KW-0238">DNA-binding</keyword>
<keyword id="KW-0378">Hydrolase</keyword>
<keyword id="KW-0547">Nucleotide-binding</keyword>
<keyword id="KW-1185">Reference proteome</keyword>
<sequence>MIEADRLISAGTTLPEDVADRAIRPKLLEEYVGQPQVRSQMEIFIKAAKLRGDALDHLLIFGPPGLGKTTLANIVANEMGVNLRTTSGPVLEKAGDLAAMLTNLEPHDVLFIDEIHRLSPVVEEVLYPAMEDYQLDIIIGEGPAARSIKIDLPPFTLIGATTRAGSLTSPLRDRFGIVQRLEFYQVPDLQYIVSRSARFMGLEMSDDGALEVARRARGTPRIANRLLRRVRDFAEVKHDGTISADIAAQALDMLNVDAEGFDYMDRKLLLAVIDKFFGGPVGLDNLAAAIGEERETIEDVLEPYLIQQGFLQRTPRGRMATTRAWNHFGITPPEMP</sequence>
<protein>
    <recommendedName>
        <fullName evidence="1">Holliday junction branch migration complex subunit RuvB</fullName>
        <ecNumber evidence="1">3.6.4.-</ecNumber>
    </recommendedName>
</protein>
<name>RUVB_SHIB3</name>
<accession>B2TWQ1</accession>
<dbReference type="EC" id="3.6.4.-" evidence="1"/>
<dbReference type="EMBL" id="CP001063">
    <property type="protein sequence ID" value="ACD08973.1"/>
    <property type="molecule type" value="Genomic_DNA"/>
</dbReference>
<dbReference type="RefSeq" id="WP_000568512.1">
    <property type="nucleotide sequence ID" value="NC_010658.1"/>
</dbReference>
<dbReference type="SMR" id="B2TWQ1"/>
<dbReference type="STRING" id="344609.SbBS512_E0956"/>
<dbReference type="KEGG" id="sbc:SbBS512_E0956"/>
<dbReference type="HOGENOM" id="CLU_055599_1_0_6"/>
<dbReference type="Proteomes" id="UP000001030">
    <property type="component" value="Chromosome"/>
</dbReference>
<dbReference type="GO" id="GO:0005737">
    <property type="term" value="C:cytoplasm"/>
    <property type="evidence" value="ECO:0007669"/>
    <property type="project" value="UniProtKB-SubCell"/>
</dbReference>
<dbReference type="GO" id="GO:0048476">
    <property type="term" value="C:Holliday junction resolvase complex"/>
    <property type="evidence" value="ECO:0007669"/>
    <property type="project" value="UniProtKB-UniRule"/>
</dbReference>
<dbReference type="GO" id="GO:0005524">
    <property type="term" value="F:ATP binding"/>
    <property type="evidence" value="ECO:0007669"/>
    <property type="project" value="UniProtKB-UniRule"/>
</dbReference>
<dbReference type="GO" id="GO:0016887">
    <property type="term" value="F:ATP hydrolysis activity"/>
    <property type="evidence" value="ECO:0007669"/>
    <property type="project" value="InterPro"/>
</dbReference>
<dbReference type="GO" id="GO:0000400">
    <property type="term" value="F:four-way junction DNA binding"/>
    <property type="evidence" value="ECO:0007669"/>
    <property type="project" value="UniProtKB-UniRule"/>
</dbReference>
<dbReference type="GO" id="GO:0009378">
    <property type="term" value="F:four-way junction helicase activity"/>
    <property type="evidence" value="ECO:0007669"/>
    <property type="project" value="InterPro"/>
</dbReference>
<dbReference type="GO" id="GO:0006310">
    <property type="term" value="P:DNA recombination"/>
    <property type="evidence" value="ECO:0007669"/>
    <property type="project" value="UniProtKB-UniRule"/>
</dbReference>
<dbReference type="GO" id="GO:0006281">
    <property type="term" value="P:DNA repair"/>
    <property type="evidence" value="ECO:0007669"/>
    <property type="project" value="UniProtKB-UniRule"/>
</dbReference>
<dbReference type="CDD" id="cd00009">
    <property type="entry name" value="AAA"/>
    <property type="match status" value="1"/>
</dbReference>
<dbReference type="FunFam" id="1.10.10.10:FF:000086">
    <property type="entry name" value="Holliday junction ATP-dependent DNA helicase RuvB"/>
    <property type="match status" value="1"/>
</dbReference>
<dbReference type="FunFam" id="1.10.8.60:FF:000023">
    <property type="entry name" value="Holliday junction ATP-dependent DNA helicase RuvB"/>
    <property type="match status" value="1"/>
</dbReference>
<dbReference type="FunFam" id="3.40.50.300:FF:000073">
    <property type="entry name" value="Holliday junction ATP-dependent DNA helicase RuvB"/>
    <property type="match status" value="1"/>
</dbReference>
<dbReference type="Gene3D" id="1.10.8.60">
    <property type="match status" value="1"/>
</dbReference>
<dbReference type="Gene3D" id="3.40.50.300">
    <property type="entry name" value="P-loop containing nucleotide triphosphate hydrolases"/>
    <property type="match status" value="1"/>
</dbReference>
<dbReference type="Gene3D" id="1.10.10.10">
    <property type="entry name" value="Winged helix-like DNA-binding domain superfamily/Winged helix DNA-binding domain"/>
    <property type="match status" value="1"/>
</dbReference>
<dbReference type="HAMAP" id="MF_00016">
    <property type="entry name" value="DNA_HJ_migration_RuvB"/>
    <property type="match status" value="1"/>
</dbReference>
<dbReference type="InterPro" id="IPR003593">
    <property type="entry name" value="AAA+_ATPase"/>
</dbReference>
<dbReference type="InterPro" id="IPR041445">
    <property type="entry name" value="AAA_lid_4"/>
</dbReference>
<dbReference type="InterPro" id="IPR004605">
    <property type="entry name" value="DNA_helicase_Holl-junc_RuvB"/>
</dbReference>
<dbReference type="InterPro" id="IPR027417">
    <property type="entry name" value="P-loop_NTPase"/>
</dbReference>
<dbReference type="InterPro" id="IPR008824">
    <property type="entry name" value="RuvB-like_N"/>
</dbReference>
<dbReference type="InterPro" id="IPR008823">
    <property type="entry name" value="RuvB_C"/>
</dbReference>
<dbReference type="InterPro" id="IPR036388">
    <property type="entry name" value="WH-like_DNA-bd_sf"/>
</dbReference>
<dbReference type="InterPro" id="IPR036390">
    <property type="entry name" value="WH_DNA-bd_sf"/>
</dbReference>
<dbReference type="NCBIfam" id="NF000868">
    <property type="entry name" value="PRK00080.1"/>
    <property type="match status" value="1"/>
</dbReference>
<dbReference type="NCBIfam" id="TIGR00635">
    <property type="entry name" value="ruvB"/>
    <property type="match status" value="1"/>
</dbReference>
<dbReference type="PANTHER" id="PTHR42848">
    <property type="match status" value="1"/>
</dbReference>
<dbReference type="PANTHER" id="PTHR42848:SF1">
    <property type="entry name" value="HOLLIDAY JUNCTION BRANCH MIGRATION COMPLEX SUBUNIT RUVB"/>
    <property type="match status" value="1"/>
</dbReference>
<dbReference type="Pfam" id="PF17864">
    <property type="entry name" value="AAA_lid_4"/>
    <property type="match status" value="1"/>
</dbReference>
<dbReference type="Pfam" id="PF05491">
    <property type="entry name" value="RuvB_C"/>
    <property type="match status" value="1"/>
</dbReference>
<dbReference type="Pfam" id="PF05496">
    <property type="entry name" value="RuvB_N"/>
    <property type="match status" value="1"/>
</dbReference>
<dbReference type="SMART" id="SM00382">
    <property type="entry name" value="AAA"/>
    <property type="match status" value="1"/>
</dbReference>
<dbReference type="SUPFAM" id="SSF52540">
    <property type="entry name" value="P-loop containing nucleoside triphosphate hydrolases"/>
    <property type="match status" value="1"/>
</dbReference>
<dbReference type="SUPFAM" id="SSF46785">
    <property type="entry name" value="Winged helix' DNA-binding domain"/>
    <property type="match status" value="1"/>
</dbReference>
<feature type="chain" id="PRO_1000089678" description="Holliday junction branch migration complex subunit RuvB">
    <location>
        <begin position="1"/>
        <end position="336"/>
    </location>
</feature>
<feature type="region of interest" description="Large ATPase domain (RuvB-L)" evidence="1">
    <location>
        <begin position="4"/>
        <end position="184"/>
    </location>
</feature>
<feature type="region of interest" description="Small ATPAse domain (RuvB-S)" evidence="1">
    <location>
        <begin position="185"/>
        <end position="255"/>
    </location>
</feature>
<feature type="region of interest" description="Head domain (RuvB-H)" evidence="1">
    <location>
        <begin position="258"/>
        <end position="336"/>
    </location>
</feature>
<feature type="binding site" evidence="1">
    <location>
        <position position="23"/>
    </location>
    <ligand>
        <name>ATP</name>
        <dbReference type="ChEBI" id="CHEBI:30616"/>
    </ligand>
</feature>
<feature type="binding site" evidence="1">
    <location>
        <position position="24"/>
    </location>
    <ligand>
        <name>ATP</name>
        <dbReference type="ChEBI" id="CHEBI:30616"/>
    </ligand>
</feature>
<feature type="binding site" evidence="1">
    <location>
        <position position="65"/>
    </location>
    <ligand>
        <name>ATP</name>
        <dbReference type="ChEBI" id="CHEBI:30616"/>
    </ligand>
</feature>
<feature type="binding site" evidence="1">
    <location>
        <position position="68"/>
    </location>
    <ligand>
        <name>ATP</name>
        <dbReference type="ChEBI" id="CHEBI:30616"/>
    </ligand>
</feature>
<feature type="binding site" evidence="1">
    <location>
        <position position="69"/>
    </location>
    <ligand>
        <name>ATP</name>
        <dbReference type="ChEBI" id="CHEBI:30616"/>
    </ligand>
</feature>
<feature type="binding site" evidence="1">
    <location>
        <position position="69"/>
    </location>
    <ligand>
        <name>Mg(2+)</name>
        <dbReference type="ChEBI" id="CHEBI:18420"/>
    </ligand>
</feature>
<feature type="binding site" evidence="1">
    <location>
        <position position="70"/>
    </location>
    <ligand>
        <name>ATP</name>
        <dbReference type="ChEBI" id="CHEBI:30616"/>
    </ligand>
</feature>
<feature type="binding site" evidence="1">
    <location>
        <begin position="131"/>
        <end position="133"/>
    </location>
    <ligand>
        <name>ATP</name>
        <dbReference type="ChEBI" id="CHEBI:30616"/>
    </ligand>
</feature>
<feature type="binding site" evidence="1">
    <location>
        <position position="174"/>
    </location>
    <ligand>
        <name>ATP</name>
        <dbReference type="ChEBI" id="CHEBI:30616"/>
    </ligand>
</feature>
<feature type="binding site" evidence="1">
    <location>
        <position position="184"/>
    </location>
    <ligand>
        <name>ATP</name>
        <dbReference type="ChEBI" id="CHEBI:30616"/>
    </ligand>
</feature>
<feature type="binding site" evidence="1">
    <location>
        <position position="221"/>
    </location>
    <ligand>
        <name>ATP</name>
        <dbReference type="ChEBI" id="CHEBI:30616"/>
    </ligand>
</feature>
<feature type="binding site" evidence="1">
    <location>
        <position position="294"/>
    </location>
    <ligand>
        <name>DNA</name>
        <dbReference type="ChEBI" id="CHEBI:16991"/>
    </ligand>
</feature>
<feature type="binding site" evidence="1">
    <location>
        <position position="313"/>
    </location>
    <ligand>
        <name>DNA</name>
        <dbReference type="ChEBI" id="CHEBI:16991"/>
    </ligand>
</feature>
<feature type="binding site" evidence="1">
    <location>
        <position position="318"/>
    </location>
    <ligand>
        <name>DNA</name>
        <dbReference type="ChEBI" id="CHEBI:16991"/>
    </ligand>
</feature>
<organism>
    <name type="scientific">Shigella boydii serotype 18 (strain CDC 3083-94 / BS512)</name>
    <dbReference type="NCBI Taxonomy" id="344609"/>
    <lineage>
        <taxon>Bacteria</taxon>
        <taxon>Pseudomonadati</taxon>
        <taxon>Pseudomonadota</taxon>
        <taxon>Gammaproteobacteria</taxon>
        <taxon>Enterobacterales</taxon>
        <taxon>Enterobacteriaceae</taxon>
        <taxon>Shigella</taxon>
    </lineage>
</organism>
<gene>
    <name evidence="1" type="primary">ruvB</name>
    <name type="ordered locus">SbBS512_E0956</name>
</gene>
<proteinExistence type="inferred from homology"/>
<reference key="1">
    <citation type="submission" date="2008-05" db="EMBL/GenBank/DDBJ databases">
        <title>Complete sequence of Shigella boydii serotype 18 strain BS512.</title>
        <authorList>
            <person name="Rasko D.A."/>
            <person name="Rosovitz M."/>
            <person name="Maurelli A.T."/>
            <person name="Myers G."/>
            <person name="Seshadri R."/>
            <person name="Cer R."/>
            <person name="Jiang L."/>
            <person name="Ravel J."/>
            <person name="Sebastian Y."/>
        </authorList>
    </citation>
    <scope>NUCLEOTIDE SEQUENCE [LARGE SCALE GENOMIC DNA]</scope>
    <source>
        <strain>CDC 3083-94 / BS512</strain>
    </source>
</reference>
<comment type="function">
    <text evidence="1">The RuvA-RuvB-RuvC complex processes Holliday junction (HJ) DNA during genetic recombination and DNA repair, while the RuvA-RuvB complex plays an important role in the rescue of blocked DNA replication forks via replication fork reversal (RFR). RuvA specifically binds to HJ cruciform DNA, conferring on it an open structure. The RuvB hexamer acts as an ATP-dependent pump, pulling dsDNA into and through the RuvAB complex. RuvB forms 2 homohexamers on either side of HJ DNA bound by 1 or 2 RuvA tetramers; 4 subunits per hexamer contact DNA at a time. Coordinated motions by a converter formed by DNA-disengaged RuvB subunits stimulates ATP hydrolysis and nucleotide exchange. Immobilization of the converter enables RuvB to convert the ATP-contained energy into a lever motion, pulling 2 nucleotides of DNA out of the RuvA tetramer per ATP hydrolyzed, thus driving DNA branch migration. The RuvB motors rotate together with the DNA substrate, which together with the progressing nucleotide cycle form the mechanistic basis for DNA recombination by continuous HJ branch migration. Branch migration allows RuvC to scan DNA until it finds its consensus sequence, where it cleaves and resolves cruciform DNA.</text>
</comment>
<comment type="catalytic activity">
    <reaction evidence="1">
        <text>ATP + H2O = ADP + phosphate + H(+)</text>
        <dbReference type="Rhea" id="RHEA:13065"/>
        <dbReference type="ChEBI" id="CHEBI:15377"/>
        <dbReference type="ChEBI" id="CHEBI:15378"/>
        <dbReference type="ChEBI" id="CHEBI:30616"/>
        <dbReference type="ChEBI" id="CHEBI:43474"/>
        <dbReference type="ChEBI" id="CHEBI:456216"/>
    </reaction>
</comment>
<comment type="subunit">
    <text evidence="1">Homohexamer. Forms an RuvA(8)-RuvB(12)-Holliday junction (HJ) complex. HJ DNA is sandwiched between 2 RuvA tetramers; dsDNA enters through RuvA and exits via RuvB. An RuvB hexamer assembles on each DNA strand where it exits the tetramer. Each RuvB hexamer is contacted by two RuvA subunits (via domain III) on 2 adjacent RuvB subunits; this complex drives branch migration. In the full resolvosome a probable DNA-RuvA(4)-RuvB(12)-RuvC(2) complex forms which resolves the HJ.</text>
</comment>
<comment type="subcellular location">
    <subcellularLocation>
        <location evidence="1">Cytoplasm</location>
    </subcellularLocation>
</comment>
<comment type="domain">
    <text evidence="1">Has 3 domains, the large (RuvB-L) and small ATPase (RuvB-S) domains and the C-terminal head (RuvB-H) domain. The head domain binds DNA, while the ATPase domains jointly bind ATP, ADP or are empty depending on the state of the subunit in the translocation cycle. During a single DNA translocation step the structure of each domain remains the same, but their relative positions change.</text>
</comment>
<comment type="similarity">
    <text evidence="1">Belongs to the RuvB family.</text>
</comment>